<keyword id="KW-0255">Endonuclease</keyword>
<keyword id="KW-0378">Hydrolase</keyword>
<keyword id="KW-0540">Nuclease</keyword>
<keyword id="KW-1185">Reference proteome</keyword>
<keyword id="KW-0694">RNA-binding</keyword>
<keyword id="KW-0819">tRNA processing</keyword>
<protein>
    <recommendedName>
        <fullName evidence="1">Ribonuclease P protein component</fullName>
        <shortName evidence="1">RNase P protein</shortName>
        <shortName evidence="1">RNaseP protein</shortName>
        <ecNumber evidence="1">3.1.26.5</ecNumber>
    </recommendedName>
    <alternativeName>
        <fullName evidence="1">Protein C5</fullName>
    </alternativeName>
</protein>
<name>RNPA_RIPO1</name>
<gene>
    <name evidence="1" type="primary">rnpA</name>
    <name type="ordered locus">PCC8801_4062</name>
</gene>
<feature type="chain" id="PRO_1000194628" description="Ribonuclease P protein component">
    <location>
        <begin position="1"/>
        <end position="127"/>
    </location>
</feature>
<accession>B7K5U5</accession>
<evidence type="ECO:0000255" key="1">
    <source>
        <dbReference type="HAMAP-Rule" id="MF_00227"/>
    </source>
</evidence>
<reference key="1">
    <citation type="journal article" date="2011" name="MBio">
        <title>Novel metabolic attributes of the genus Cyanothece, comprising a group of unicellular nitrogen-fixing Cyanobacteria.</title>
        <authorList>
            <person name="Bandyopadhyay A."/>
            <person name="Elvitigala T."/>
            <person name="Welsh E."/>
            <person name="Stockel J."/>
            <person name="Liberton M."/>
            <person name="Min H."/>
            <person name="Sherman L.A."/>
            <person name="Pakrasi H.B."/>
        </authorList>
    </citation>
    <scope>NUCLEOTIDE SEQUENCE [LARGE SCALE GENOMIC DNA]</scope>
    <source>
        <strain>PCC 8801 / RF-1</strain>
    </source>
</reference>
<proteinExistence type="inferred from homology"/>
<organism>
    <name type="scientific">Rippkaea orientalis (strain PCC 8801 / RF-1)</name>
    <name type="common">Cyanothece sp. (strain PCC 8801)</name>
    <dbReference type="NCBI Taxonomy" id="41431"/>
    <lineage>
        <taxon>Bacteria</taxon>
        <taxon>Bacillati</taxon>
        <taxon>Cyanobacteriota</taxon>
        <taxon>Cyanophyceae</taxon>
        <taxon>Oscillatoriophycideae</taxon>
        <taxon>Chroococcales</taxon>
        <taxon>Aphanothecaceae</taxon>
        <taxon>Rippkaea</taxon>
        <taxon>Rippkaea orientalis</taxon>
    </lineage>
</organism>
<dbReference type="EC" id="3.1.26.5" evidence="1"/>
<dbReference type="EMBL" id="CP001287">
    <property type="protein sequence ID" value="ACK67998.1"/>
    <property type="molecule type" value="Genomic_DNA"/>
</dbReference>
<dbReference type="RefSeq" id="WP_012597251.1">
    <property type="nucleotide sequence ID" value="NC_011726.1"/>
</dbReference>
<dbReference type="SMR" id="B7K5U5"/>
<dbReference type="STRING" id="41431.PCC8801_4062"/>
<dbReference type="KEGG" id="cyp:PCC8801_4062"/>
<dbReference type="eggNOG" id="COG0594">
    <property type="taxonomic scope" value="Bacteria"/>
</dbReference>
<dbReference type="HOGENOM" id="CLU_117179_9_0_3"/>
<dbReference type="OrthoDB" id="458878at2"/>
<dbReference type="Proteomes" id="UP000008204">
    <property type="component" value="Chromosome"/>
</dbReference>
<dbReference type="GO" id="GO:0030677">
    <property type="term" value="C:ribonuclease P complex"/>
    <property type="evidence" value="ECO:0007669"/>
    <property type="project" value="TreeGrafter"/>
</dbReference>
<dbReference type="GO" id="GO:0042781">
    <property type="term" value="F:3'-tRNA processing endoribonuclease activity"/>
    <property type="evidence" value="ECO:0007669"/>
    <property type="project" value="TreeGrafter"/>
</dbReference>
<dbReference type="GO" id="GO:0004526">
    <property type="term" value="F:ribonuclease P activity"/>
    <property type="evidence" value="ECO:0007669"/>
    <property type="project" value="UniProtKB-UniRule"/>
</dbReference>
<dbReference type="GO" id="GO:0000049">
    <property type="term" value="F:tRNA binding"/>
    <property type="evidence" value="ECO:0007669"/>
    <property type="project" value="UniProtKB-UniRule"/>
</dbReference>
<dbReference type="GO" id="GO:0001682">
    <property type="term" value="P:tRNA 5'-leader removal"/>
    <property type="evidence" value="ECO:0007669"/>
    <property type="project" value="UniProtKB-UniRule"/>
</dbReference>
<dbReference type="Gene3D" id="3.30.230.10">
    <property type="match status" value="1"/>
</dbReference>
<dbReference type="HAMAP" id="MF_00227">
    <property type="entry name" value="RNase_P"/>
    <property type="match status" value="1"/>
</dbReference>
<dbReference type="InterPro" id="IPR020568">
    <property type="entry name" value="Ribosomal_Su5_D2-typ_SF"/>
</dbReference>
<dbReference type="InterPro" id="IPR014721">
    <property type="entry name" value="Ribsml_uS5_D2-typ_fold_subgr"/>
</dbReference>
<dbReference type="InterPro" id="IPR000100">
    <property type="entry name" value="RNase_P"/>
</dbReference>
<dbReference type="InterPro" id="IPR020539">
    <property type="entry name" value="RNase_P_CS"/>
</dbReference>
<dbReference type="NCBIfam" id="TIGR00188">
    <property type="entry name" value="rnpA"/>
    <property type="match status" value="1"/>
</dbReference>
<dbReference type="PANTHER" id="PTHR33992">
    <property type="entry name" value="RIBONUCLEASE P PROTEIN COMPONENT"/>
    <property type="match status" value="1"/>
</dbReference>
<dbReference type="PANTHER" id="PTHR33992:SF1">
    <property type="entry name" value="RIBONUCLEASE P PROTEIN COMPONENT"/>
    <property type="match status" value="1"/>
</dbReference>
<dbReference type="Pfam" id="PF00825">
    <property type="entry name" value="Ribonuclease_P"/>
    <property type="match status" value="1"/>
</dbReference>
<dbReference type="SUPFAM" id="SSF54211">
    <property type="entry name" value="Ribosomal protein S5 domain 2-like"/>
    <property type="match status" value="1"/>
</dbReference>
<dbReference type="PROSITE" id="PS00648">
    <property type="entry name" value="RIBONUCLEASE_P"/>
    <property type="match status" value="1"/>
</dbReference>
<comment type="function">
    <text evidence="1">RNaseP catalyzes the removal of the 5'-leader sequence from pre-tRNA to produce the mature 5'-terminus. It can also cleave other RNA substrates such as 4.5S RNA. The protein component plays an auxiliary but essential role in vivo by binding to the 5'-leader sequence and broadening the substrate specificity of the ribozyme.</text>
</comment>
<comment type="catalytic activity">
    <reaction evidence="1">
        <text>Endonucleolytic cleavage of RNA, removing 5'-extranucleotides from tRNA precursor.</text>
        <dbReference type="EC" id="3.1.26.5"/>
    </reaction>
</comment>
<comment type="subunit">
    <text evidence="1">Consists of a catalytic RNA component (M1 or rnpB) and a protein subunit.</text>
</comment>
<comment type="similarity">
    <text evidence="1">Belongs to the RnpA family.</text>
</comment>
<sequence length="127" mass="14703">MGLPKLNRLKSPREFQAVYQRGQRYQSDRLVLRVLWITDKTSNPAPTQFGIAISQKVSKKAVVRNRLKRQIKGAIRVLLPFIAPGAKIVISVRGNVSECQYEHFLRELKKLLIKAKIIYGHTREYFL</sequence>